<comment type="function">
    <text evidence="1">Catalyzes the interconversion of 2-phosphoglycerate and 3-phosphoglycerate.</text>
</comment>
<comment type="catalytic activity">
    <reaction evidence="1">
        <text>(2R)-2-phosphoglycerate = (2R)-3-phosphoglycerate</text>
        <dbReference type="Rhea" id="RHEA:15901"/>
        <dbReference type="ChEBI" id="CHEBI:58272"/>
        <dbReference type="ChEBI" id="CHEBI:58289"/>
        <dbReference type="EC" id="5.4.2.12"/>
    </reaction>
</comment>
<comment type="cofactor">
    <cofactor evidence="1">
        <name>Mn(2+)</name>
        <dbReference type="ChEBI" id="CHEBI:29035"/>
    </cofactor>
    <text evidence="1">Binds 2 manganese ions per subunit.</text>
</comment>
<comment type="pathway">
    <text evidence="1">Carbohydrate degradation; glycolysis; pyruvate from D-glyceraldehyde 3-phosphate: step 3/5.</text>
</comment>
<comment type="subunit">
    <text evidence="1">Monomer.</text>
</comment>
<comment type="similarity">
    <text evidence="1">Belongs to the BPG-independent phosphoglycerate mutase family.</text>
</comment>
<sequence>MSTPEPVLAGPGILLVLDGWGSADAADDNALSLARTPVLDELVAQHPSTLAEASGEAVGLLPGTVGNSEIGHMVIGAGRPLPYDSLLVQQAIDSGALRSHPRLDAVLNEVAATSGALHLIGLCSDGQIHAHVEHLSELLAAAATHQVERVFIHAITDGRDVADHTGEAYLTRVAELAAAAGTGQIATVIGRGYAMDKAGDLDLTERAVALVADGRGSPADSAHSAVHSSERGDEWVPASVLTEAGDARVADGDAVLWFNFRSDRIQQFADRLHEHLTASGRTVNMVSLAQYDTRTAIPALVKRADASGGLADELQEAGLRSVRIAETEKFEHVTYYINGRDATVRDGEEHVRITGEGKADYVAHPHMNLDRVTDAVVEAAGRVDVDLVIANLANIDVVGHTGNLAATVTACEATDAAVDQILQAARNSGRWVVAVGDHGNAERMTKQAPDGSVRPYGGHTTNPVPLVIVPNRTDTPAPTLPGTATLADVAPTILHLLGHKPGPAMTGRPLL</sequence>
<reference key="1">
    <citation type="journal article" date="2002" name="Nature">
        <title>Complete genome sequence of the model actinomycete Streptomyces coelicolor A3(2).</title>
        <authorList>
            <person name="Bentley S.D."/>
            <person name="Chater K.F."/>
            <person name="Cerdeno-Tarraga A.-M."/>
            <person name="Challis G.L."/>
            <person name="Thomson N.R."/>
            <person name="James K.D."/>
            <person name="Harris D.E."/>
            <person name="Quail M.A."/>
            <person name="Kieser H."/>
            <person name="Harper D."/>
            <person name="Bateman A."/>
            <person name="Brown S."/>
            <person name="Chandra G."/>
            <person name="Chen C.W."/>
            <person name="Collins M."/>
            <person name="Cronin A."/>
            <person name="Fraser A."/>
            <person name="Goble A."/>
            <person name="Hidalgo J."/>
            <person name="Hornsby T."/>
            <person name="Howarth S."/>
            <person name="Huang C.-H."/>
            <person name="Kieser T."/>
            <person name="Larke L."/>
            <person name="Murphy L.D."/>
            <person name="Oliver K."/>
            <person name="O'Neil S."/>
            <person name="Rabbinowitsch E."/>
            <person name="Rajandream M.A."/>
            <person name="Rutherford K.M."/>
            <person name="Rutter S."/>
            <person name="Seeger K."/>
            <person name="Saunders D."/>
            <person name="Sharp S."/>
            <person name="Squares R."/>
            <person name="Squares S."/>
            <person name="Taylor K."/>
            <person name="Warren T."/>
            <person name="Wietzorrek A."/>
            <person name="Woodward J.R."/>
            <person name="Barrell B.G."/>
            <person name="Parkhill J."/>
            <person name="Hopwood D.A."/>
        </authorList>
    </citation>
    <scope>NUCLEOTIDE SEQUENCE [LARGE SCALE GENOMIC DNA]</scope>
    <source>
        <strain>ATCC BAA-471 / A3(2) / M145</strain>
    </source>
</reference>
<evidence type="ECO:0000255" key="1">
    <source>
        <dbReference type="HAMAP-Rule" id="MF_01038"/>
    </source>
</evidence>
<evidence type="ECO:0000256" key="2">
    <source>
        <dbReference type="SAM" id="MobiDB-lite"/>
    </source>
</evidence>
<proteinExistence type="inferred from homology"/>
<name>GPMI_STRCO</name>
<keyword id="KW-0324">Glycolysis</keyword>
<keyword id="KW-0413">Isomerase</keyword>
<keyword id="KW-0464">Manganese</keyword>
<keyword id="KW-0479">Metal-binding</keyword>
<keyword id="KW-1185">Reference proteome</keyword>
<dbReference type="EC" id="5.4.2.12" evidence="1"/>
<dbReference type="EMBL" id="AL939129">
    <property type="protein sequence ID" value="CAB71265.1"/>
    <property type="molecule type" value="Genomic_DNA"/>
</dbReference>
<dbReference type="RefSeq" id="NP_630890.1">
    <property type="nucleotide sequence ID" value="NC_003888.3"/>
</dbReference>
<dbReference type="RefSeq" id="WP_011031205.1">
    <property type="nucleotide sequence ID" value="NZ_VNID01000002.1"/>
</dbReference>
<dbReference type="SMR" id="Q9L214"/>
<dbReference type="STRING" id="100226.gene:17764477"/>
<dbReference type="PaxDb" id="100226-SCO6818"/>
<dbReference type="KEGG" id="sco:SCO6818"/>
<dbReference type="PATRIC" id="fig|100226.15.peg.6927"/>
<dbReference type="eggNOG" id="COG0696">
    <property type="taxonomic scope" value="Bacteria"/>
</dbReference>
<dbReference type="HOGENOM" id="CLU_026099_2_0_11"/>
<dbReference type="InParanoid" id="Q9L214"/>
<dbReference type="OrthoDB" id="9800863at2"/>
<dbReference type="PhylomeDB" id="Q9L214"/>
<dbReference type="UniPathway" id="UPA00109">
    <property type="reaction ID" value="UER00186"/>
</dbReference>
<dbReference type="Proteomes" id="UP000001973">
    <property type="component" value="Chromosome"/>
</dbReference>
<dbReference type="GO" id="GO:0005829">
    <property type="term" value="C:cytosol"/>
    <property type="evidence" value="ECO:0000318"/>
    <property type="project" value="GO_Central"/>
</dbReference>
<dbReference type="GO" id="GO:0030145">
    <property type="term" value="F:manganese ion binding"/>
    <property type="evidence" value="ECO:0000318"/>
    <property type="project" value="GO_Central"/>
</dbReference>
<dbReference type="GO" id="GO:0004619">
    <property type="term" value="F:phosphoglycerate mutase activity"/>
    <property type="evidence" value="ECO:0000318"/>
    <property type="project" value="GO_Central"/>
</dbReference>
<dbReference type="GO" id="GO:0005975">
    <property type="term" value="P:carbohydrate metabolic process"/>
    <property type="evidence" value="ECO:0000318"/>
    <property type="project" value="GO_Central"/>
</dbReference>
<dbReference type="GO" id="GO:0006007">
    <property type="term" value="P:glucose catabolic process"/>
    <property type="evidence" value="ECO:0007669"/>
    <property type="project" value="InterPro"/>
</dbReference>
<dbReference type="GO" id="GO:0006096">
    <property type="term" value="P:glycolytic process"/>
    <property type="evidence" value="ECO:0007669"/>
    <property type="project" value="UniProtKB-UniRule"/>
</dbReference>
<dbReference type="CDD" id="cd16010">
    <property type="entry name" value="iPGM"/>
    <property type="match status" value="1"/>
</dbReference>
<dbReference type="FunFam" id="3.40.1450.10:FF:000002">
    <property type="entry name" value="2,3-bisphosphoglycerate-independent phosphoglycerate mutase"/>
    <property type="match status" value="1"/>
</dbReference>
<dbReference type="Gene3D" id="3.40.720.10">
    <property type="entry name" value="Alkaline Phosphatase, subunit A"/>
    <property type="match status" value="1"/>
</dbReference>
<dbReference type="Gene3D" id="3.40.1450.10">
    <property type="entry name" value="BPG-independent phosphoglycerate mutase, domain B"/>
    <property type="match status" value="1"/>
</dbReference>
<dbReference type="HAMAP" id="MF_01038">
    <property type="entry name" value="GpmI"/>
    <property type="match status" value="1"/>
</dbReference>
<dbReference type="InterPro" id="IPR017850">
    <property type="entry name" value="Alkaline_phosphatase_core_sf"/>
</dbReference>
<dbReference type="InterPro" id="IPR011258">
    <property type="entry name" value="BPG-indep_PGM_N"/>
</dbReference>
<dbReference type="InterPro" id="IPR006124">
    <property type="entry name" value="Metalloenzyme"/>
</dbReference>
<dbReference type="InterPro" id="IPR036646">
    <property type="entry name" value="PGAM_B_sf"/>
</dbReference>
<dbReference type="InterPro" id="IPR005995">
    <property type="entry name" value="Pgm_bpd_ind"/>
</dbReference>
<dbReference type="NCBIfam" id="TIGR01307">
    <property type="entry name" value="pgm_bpd_ind"/>
    <property type="match status" value="1"/>
</dbReference>
<dbReference type="PANTHER" id="PTHR31637">
    <property type="entry name" value="2,3-BISPHOSPHOGLYCERATE-INDEPENDENT PHOSPHOGLYCERATE MUTASE"/>
    <property type="match status" value="1"/>
</dbReference>
<dbReference type="PANTHER" id="PTHR31637:SF0">
    <property type="entry name" value="2,3-BISPHOSPHOGLYCERATE-INDEPENDENT PHOSPHOGLYCERATE MUTASE"/>
    <property type="match status" value="1"/>
</dbReference>
<dbReference type="Pfam" id="PF06415">
    <property type="entry name" value="iPGM_N"/>
    <property type="match status" value="1"/>
</dbReference>
<dbReference type="Pfam" id="PF01676">
    <property type="entry name" value="Metalloenzyme"/>
    <property type="match status" value="1"/>
</dbReference>
<dbReference type="PIRSF" id="PIRSF001492">
    <property type="entry name" value="IPGAM"/>
    <property type="match status" value="1"/>
</dbReference>
<dbReference type="SUPFAM" id="SSF64158">
    <property type="entry name" value="2,3-Bisphosphoglycerate-independent phosphoglycerate mutase, substrate-binding domain"/>
    <property type="match status" value="1"/>
</dbReference>
<dbReference type="SUPFAM" id="SSF53649">
    <property type="entry name" value="Alkaline phosphatase-like"/>
    <property type="match status" value="1"/>
</dbReference>
<accession>Q9L214</accession>
<organism>
    <name type="scientific">Streptomyces coelicolor (strain ATCC BAA-471 / A3(2) / M145)</name>
    <dbReference type="NCBI Taxonomy" id="100226"/>
    <lineage>
        <taxon>Bacteria</taxon>
        <taxon>Bacillati</taxon>
        <taxon>Actinomycetota</taxon>
        <taxon>Actinomycetes</taxon>
        <taxon>Kitasatosporales</taxon>
        <taxon>Streptomycetaceae</taxon>
        <taxon>Streptomyces</taxon>
        <taxon>Streptomyces albidoflavus group</taxon>
    </lineage>
</organism>
<feature type="chain" id="PRO_0000212217" description="2,3-bisphosphoglycerate-independent phosphoglycerate mutase">
    <location>
        <begin position="1"/>
        <end position="511"/>
    </location>
</feature>
<feature type="region of interest" description="Disordered" evidence="2">
    <location>
        <begin position="442"/>
        <end position="464"/>
    </location>
</feature>
<feature type="active site" description="Phosphoserine intermediate" evidence="1">
    <location>
        <position position="68"/>
    </location>
</feature>
<feature type="binding site" evidence="1">
    <location>
        <position position="18"/>
    </location>
    <ligand>
        <name>Mn(2+)</name>
        <dbReference type="ChEBI" id="CHEBI:29035"/>
        <label>2</label>
    </ligand>
</feature>
<feature type="binding site" evidence="1">
    <location>
        <position position="68"/>
    </location>
    <ligand>
        <name>Mn(2+)</name>
        <dbReference type="ChEBI" id="CHEBI:29035"/>
        <label>2</label>
    </ligand>
</feature>
<feature type="binding site" evidence="1">
    <location>
        <position position="129"/>
    </location>
    <ligand>
        <name>substrate</name>
    </ligand>
</feature>
<feature type="binding site" evidence="1">
    <location>
        <begin position="159"/>
        <end position="160"/>
    </location>
    <ligand>
        <name>substrate</name>
    </ligand>
</feature>
<feature type="binding site" evidence="1">
    <location>
        <position position="191"/>
    </location>
    <ligand>
        <name>substrate</name>
    </ligand>
</feature>
<feature type="binding site" evidence="1">
    <location>
        <position position="197"/>
    </location>
    <ligand>
        <name>substrate</name>
    </ligand>
</feature>
<feature type="binding site" evidence="1">
    <location>
        <begin position="261"/>
        <end position="264"/>
    </location>
    <ligand>
        <name>substrate</name>
    </ligand>
</feature>
<feature type="binding site" evidence="1">
    <location>
        <position position="329"/>
    </location>
    <ligand>
        <name>substrate</name>
    </ligand>
</feature>
<feature type="binding site" evidence="1">
    <location>
        <position position="396"/>
    </location>
    <ligand>
        <name>Mn(2+)</name>
        <dbReference type="ChEBI" id="CHEBI:29035"/>
        <label>1</label>
    </ligand>
</feature>
<feature type="binding site" evidence="1">
    <location>
        <position position="400"/>
    </location>
    <ligand>
        <name>Mn(2+)</name>
        <dbReference type="ChEBI" id="CHEBI:29035"/>
        <label>1</label>
    </ligand>
</feature>
<feature type="binding site" evidence="1">
    <location>
        <position position="437"/>
    </location>
    <ligand>
        <name>Mn(2+)</name>
        <dbReference type="ChEBI" id="CHEBI:29035"/>
        <label>2</label>
    </ligand>
</feature>
<feature type="binding site" evidence="1">
    <location>
        <position position="438"/>
    </location>
    <ligand>
        <name>Mn(2+)</name>
        <dbReference type="ChEBI" id="CHEBI:29035"/>
        <label>2</label>
    </ligand>
</feature>
<feature type="binding site" evidence="1">
    <location>
        <position position="459"/>
    </location>
    <ligand>
        <name>Mn(2+)</name>
        <dbReference type="ChEBI" id="CHEBI:29035"/>
        <label>1</label>
    </ligand>
</feature>
<gene>
    <name evidence="1" type="primary">gpmI</name>
    <name type="ordered locus">SCO6818</name>
    <name type="ORF">SC1A2.27c</name>
</gene>
<protein>
    <recommendedName>
        <fullName evidence="1">2,3-bisphosphoglycerate-independent phosphoglycerate mutase</fullName>
        <shortName evidence="1">BPG-independent PGAM</shortName>
        <shortName evidence="1">Phosphoglyceromutase</shortName>
        <shortName evidence="1">iPGM</shortName>
        <ecNumber evidence="1">5.4.2.12</ecNumber>
    </recommendedName>
</protein>